<gene>
    <name type="primary">tp53</name>
    <name type="synonym">p53</name>
</gene>
<proteinExistence type="evidence at transcript level"/>
<comment type="function">
    <text evidence="1">Multifunctional transcription factor that induces cell cycle arrest, DNA repair or apoptosis upon binding to its target DNA sequence. Acts as a tumor suppressor in many tumor types; induces growth arrest or apoptosis depending on the physiological circumstances and cell type. Negatively regulates cell division by controlling expression of a set of genes required for this process. One of the activated genes is an inhibitor of cyclin-dependent kinases. Apoptosis induction seems to be mediated either by stimulation of BAX and FAS antigen expression, or by repression of Bcl-2 expression (By similarity).</text>
</comment>
<comment type="cofactor">
    <cofactor evidence="1">
        <name>Zn(2+)</name>
        <dbReference type="ChEBI" id="CHEBI:29105"/>
    </cofactor>
    <text evidence="1">Binds 1 zinc ion per subunit.</text>
</comment>
<comment type="subunit">
    <text evidence="1">Binds DNA as a homotetramer.</text>
</comment>
<comment type="subcellular location">
    <subcellularLocation>
        <location evidence="1">Cytoplasm</location>
    </subcellularLocation>
    <subcellularLocation>
        <location evidence="1">Nucleus</location>
    </subcellularLocation>
</comment>
<comment type="domain">
    <text evidence="2">The N-terminal and C-terminal disordered regions undergo liquid-liquid phase separation (LLPS) following homotetramerization and activation. Post-translational modifications, such as phosphorylation or lactylation affect the ability to undergo LLPS.</text>
</comment>
<comment type="domain">
    <text evidence="2">The nuclear export signal acts as a transcriptional repression domain. The TADI and TADII motifs (residues 17 to 25 and 48 to 56) correspond both to 9aaTAD motifs which are transactivation domains present in a large number of yeast and animal transcription factors.</text>
</comment>
<comment type="similarity">
    <text evidence="4">Belongs to the p53 family.</text>
</comment>
<organism>
    <name type="scientific">Tetraodon miurus</name>
    <name type="common">Congo puffer</name>
    <dbReference type="NCBI Taxonomy" id="94908"/>
    <lineage>
        <taxon>Eukaryota</taxon>
        <taxon>Metazoa</taxon>
        <taxon>Chordata</taxon>
        <taxon>Craniata</taxon>
        <taxon>Vertebrata</taxon>
        <taxon>Euteleostomi</taxon>
        <taxon>Actinopterygii</taxon>
        <taxon>Neopterygii</taxon>
        <taxon>Teleostei</taxon>
        <taxon>Neoteleostei</taxon>
        <taxon>Acanthomorphata</taxon>
        <taxon>Eupercaria</taxon>
        <taxon>Tetraodontiformes</taxon>
        <taxon>Tetradontoidea</taxon>
        <taxon>Tetraodontidae</taxon>
        <taxon>Tetraodon</taxon>
    </lineage>
</organism>
<sequence>MEEENISLPLSQDTFQDLWDNVSAPPISTIQTAALENEAWPAERQMNMMCNFMDSTFNEALFNLLPEPPSRDGANSSSPTVPVTTDYPGEYGFKLRFQKSGTAKSVTSTYSEILNKLYCQLAKTSLVEVLLGKDPPMGAVLRATAIYKKTEHVAEVVRRCPHHQNEDSAEHRSHLIRMEGSERAQYFEHPHTKRQSVTVPYEPPQLGSEFTTILLSFMCNSSCMGGMNRRPILTILTLETQEGIVLGRRCFEVRVCACPGRDRKTEETNSTKMQNDAKDAKKRKSVPTPDSTTIKKSKTASSAEEDNNEVYTLQIRGRKRYEMLKKINDGLDLLENKPKSKATHRPDGPIPPSGKRLLHRGEKSDSD</sequence>
<evidence type="ECO:0000250" key="1"/>
<evidence type="ECO:0000250" key="2">
    <source>
        <dbReference type="UniProtKB" id="P04637"/>
    </source>
</evidence>
<evidence type="ECO:0000256" key="3">
    <source>
        <dbReference type="SAM" id="MobiDB-lite"/>
    </source>
</evidence>
<evidence type="ECO:0000305" key="4"/>
<name>P53_TETMU</name>
<keyword id="KW-0010">Activator</keyword>
<keyword id="KW-0053">Apoptosis</keyword>
<keyword id="KW-0131">Cell cycle</keyword>
<keyword id="KW-0963">Cytoplasm</keyword>
<keyword id="KW-0238">DNA-binding</keyword>
<keyword id="KW-0479">Metal-binding</keyword>
<keyword id="KW-0539">Nucleus</keyword>
<keyword id="KW-0597">Phosphoprotein</keyword>
<keyword id="KW-0804">Transcription</keyword>
<keyword id="KW-0805">Transcription regulation</keyword>
<keyword id="KW-0043">Tumor suppressor</keyword>
<keyword id="KW-0862">Zinc</keyword>
<dbReference type="EMBL" id="AF071571">
    <property type="protein sequence ID" value="AAD34213.1"/>
    <property type="molecule type" value="mRNA"/>
</dbReference>
<dbReference type="SMR" id="Q9W679"/>
<dbReference type="GO" id="GO:0005737">
    <property type="term" value="C:cytoplasm"/>
    <property type="evidence" value="ECO:0000250"/>
    <property type="project" value="UniProtKB"/>
</dbReference>
<dbReference type="GO" id="GO:0005739">
    <property type="term" value="C:mitochondrion"/>
    <property type="evidence" value="ECO:0000250"/>
    <property type="project" value="UniProtKB"/>
</dbReference>
<dbReference type="GO" id="GO:0005634">
    <property type="term" value="C:nucleus"/>
    <property type="evidence" value="ECO:0000250"/>
    <property type="project" value="UniProtKB"/>
</dbReference>
<dbReference type="GO" id="GO:0000981">
    <property type="term" value="F:DNA-binding transcription factor activity, RNA polymerase II-specific"/>
    <property type="evidence" value="ECO:0007669"/>
    <property type="project" value="TreeGrafter"/>
</dbReference>
<dbReference type="GO" id="GO:0046872">
    <property type="term" value="F:metal ion binding"/>
    <property type="evidence" value="ECO:0007669"/>
    <property type="project" value="UniProtKB-KW"/>
</dbReference>
<dbReference type="GO" id="GO:0140693">
    <property type="term" value="F:molecular condensate scaffold activity"/>
    <property type="evidence" value="ECO:0000250"/>
    <property type="project" value="UniProtKB"/>
</dbReference>
<dbReference type="GO" id="GO:1990841">
    <property type="term" value="F:promoter-specific chromatin binding"/>
    <property type="evidence" value="ECO:0000250"/>
    <property type="project" value="UniProtKB"/>
</dbReference>
<dbReference type="GO" id="GO:0000978">
    <property type="term" value="F:RNA polymerase II cis-regulatory region sequence-specific DNA binding"/>
    <property type="evidence" value="ECO:0007669"/>
    <property type="project" value="TreeGrafter"/>
</dbReference>
<dbReference type="GO" id="GO:0006915">
    <property type="term" value="P:apoptotic process"/>
    <property type="evidence" value="ECO:0007669"/>
    <property type="project" value="UniProtKB-KW"/>
</dbReference>
<dbReference type="GO" id="GO:0006974">
    <property type="term" value="P:DNA damage response"/>
    <property type="evidence" value="ECO:0000250"/>
    <property type="project" value="UniProtKB"/>
</dbReference>
<dbReference type="GO" id="GO:0045944">
    <property type="term" value="P:positive regulation of transcription by RNA polymerase II"/>
    <property type="evidence" value="ECO:0000250"/>
    <property type="project" value="UniProtKB"/>
</dbReference>
<dbReference type="GO" id="GO:0051262">
    <property type="term" value="P:protein tetramerization"/>
    <property type="evidence" value="ECO:0007669"/>
    <property type="project" value="InterPro"/>
</dbReference>
<dbReference type="CDD" id="cd08367">
    <property type="entry name" value="P53"/>
    <property type="match status" value="1"/>
</dbReference>
<dbReference type="FunFam" id="4.10.170.10:FF:000005">
    <property type="entry name" value="Cellular tumor antigen p53"/>
    <property type="match status" value="1"/>
</dbReference>
<dbReference type="Gene3D" id="2.60.40.720">
    <property type="match status" value="1"/>
</dbReference>
<dbReference type="Gene3D" id="4.10.170.10">
    <property type="entry name" value="p53-like tetramerisation domain"/>
    <property type="match status" value="1"/>
</dbReference>
<dbReference type="InterPro" id="IPR008967">
    <property type="entry name" value="p53-like_TF_DNA-bd_sf"/>
</dbReference>
<dbReference type="InterPro" id="IPR012346">
    <property type="entry name" value="p53/RUNT-type_TF_DNA-bd_sf"/>
</dbReference>
<dbReference type="InterPro" id="IPR011615">
    <property type="entry name" value="p53_DNA-bd"/>
</dbReference>
<dbReference type="InterPro" id="IPR036674">
    <property type="entry name" value="p53_tetramer_sf"/>
</dbReference>
<dbReference type="InterPro" id="IPR010991">
    <property type="entry name" value="p53_tetrameristn"/>
</dbReference>
<dbReference type="InterPro" id="IPR013872">
    <property type="entry name" value="p53_transactivation_domain"/>
</dbReference>
<dbReference type="InterPro" id="IPR002117">
    <property type="entry name" value="p53_tumour_suppressor"/>
</dbReference>
<dbReference type="PANTHER" id="PTHR11447">
    <property type="entry name" value="CELLULAR TUMOR ANTIGEN P53"/>
    <property type="match status" value="1"/>
</dbReference>
<dbReference type="PANTHER" id="PTHR11447:SF6">
    <property type="entry name" value="CELLULAR TUMOR ANTIGEN P53"/>
    <property type="match status" value="1"/>
</dbReference>
<dbReference type="Pfam" id="PF00870">
    <property type="entry name" value="P53"/>
    <property type="match status" value="1"/>
</dbReference>
<dbReference type="Pfam" id="PF08563">
    <property type="entry name" value="P53_TAD"/>
    <property type="match status" value="1"/>
</dbReference>
<dbReference type="Pfam" id="PF07710">
    <property type="entry name" value="P53_tetramer"/>
    <property type="match status" value="1"/>
</dbReference>
<dbReference type="PRINTS" id="PR00386">
    <property type="entry name" value="P53SUPPRESSR"/>
</dbReference>
<dbReference type="SUPFAM" id="SSF47719">
    <property type="entry name" value="p53 tetramerization domain"/>
    <property type="match status" value="1"/>
</dbReference>
<dbReference type="SUPFAM" id="SSF49417">
    <property type="entry name" value="p53-like transcription factors"/>
    <property type="match status" value="1"/>
</dbReference>
<dbReference type="PROSITE" id="PS00348">
    <property type="entry name" value="P53"/>
    <property type="match status" value="1"/>
</dbReference>
<protein>
    <recommendedName>
        <fullName>Cellular tumor antigen p53</fullName>
    </recommendedName>
    <alternativeName>
        <fullName>Tumor suppressor p53</fullName>
    </alternativeName>
</protein>
<accession>Q9W679</accession>
<reference key="1">
    <citation type="submission" date="1998-06" db="EMBL/GenBank/DDBJ databases">
        <title>Evolutionary conservancy of p53 gene sequences in fish.</title>
        <authorList>
            <person name="Bhaskaran A."/>
            <person name="May D."/>
            <person name="Rand-Weaver M."/>
            <person name="Tyler C.R."/>
        </authorList>
    </citation>
    <scope>NUCLEOTIDE SEQUENCE [MRNA]</scope>
    <source>
        <tissue>Ovary</tissue>
    </source>
</reference>
<feature type="chain" id="PRO_0000185723" description="Cellular tumor antigen p53">
    <location>
        <begin position="1"/>
        <end position="367"/>
    </location>
</feature>
<feature type="DNA-binding region" evidence="1">
    <location>
        <begin position="86"/>
        <end position="273"/>
    </location>
</feature>
<feature type="region of interest" description="Transcription activation (acidic)">
    <location>
        <begin position="1"/>
        <end position="47"/>
    </location>
</feature>
<feature type="region of interest" description="Interaction with DNA" evidence="1">
    <location>
        <begin position="254"/>
        <end position="261"/>
    </location>
</feature>
<feature type="region of interest" description="Disordered" evidence="3">
    <location>
        <begin position="262"/>
        <end position="306"/>
    </location>
</feature>
<feature type="region of interest" description="Oligomerization">
    <location>
        <begin position="308"/>
        <end position="337"/>
    </location>
</feature>
<feature type="region of interest" description="Disordered" evidence="3">
    <location>
        <begin position="332"/>
        <end position="367"/>
    </location>
</feature>
<feature type="region of interest" description="Basic (repression of DNA-binding)">
    <location>
        <begin position="342"/>
        <end position="363"/>
    </location>
</feature>
<feature type="short sequence motif" description="Bipartite nuclear localization signal" evidence="1">
    <location>
        <begin position="282"/>
        <end position="300"/>
    </location>
</feature>
<feature type="short sequence motif" description="Nuclear export signal" evidence="1">
    <location>
        <begin position="322"/>
        <end position="333"/>
    </location>
</feature>
<feature type="compositionally biased region" description="Basic and acidic residues" evidence="3">
    <location>
        <begin position="262"/>
        <end position="279"/>
    </location>
</feature>
<feature type="compositionally biased region" description="Low complexity" evidence="3">
    <location>
        <begin position="291"/>
        <end position="302"/>
    </location>
</feature>
<feature type="binding site" evidence="1">
    <location>
        <position position="160"/>
    </location>
    <ligand>
        <name>Zn(2+)</name>
        <dbReference type="ChEBI" id="CHEBI:29105"/>
    </ligand>
</feature>
<feature type="binding site" evidence="1">
    <location>
        <position position="163"/>
    </location>
    <ligand>
        <name>Zn(2+)</name>
        <dbReference type="ChEBI" id="CHEBI:29105"/>
    </ligand>
</feature>
<feature type="binding site" evidence="1">
    <location>
        <position position="219"/>
    </location>
    <ligand>
        <name>Zn(2+)</name>
        <dbReference type="ChEBI" id="CHEBI:29105"/>
    </ligand>
</feature>
<feature type="binding site" evidence="1">
    <location>
        <position position="223"/>
    </location>
    <ligand>
        <name>Zn(2+)</name>
        <dbReference type="ChEBI" id="CHEBI:29105"/>
    </ligand>
</feature>
<feature type="site" description="Interaction with DNA" evidence="1">
    <location>
        <position position="104"/>
    </location>
</feature>